<name>PROB_HAEIE</name>
<comment type="function">
    <text evidence="1">Catalyzes the transfer of a phosphate group to glutamate to form L-glutamate 5-phosphate.</text>
</comment>
<comment type="catalytic activity">
    <reaction evidence="1">
        <text>L-glutamate + ATP = L-glutamyl 5-phosphate + ADP</text>
        <dbReference type="Rhea" id="RHEA:14877"/>
        <dbReference type="ChEBI" id="CHEBI:29985"/>
        <dbReference type="ChEBI" id="CHEBI:30616"/>
        <dbReference type="ChEBI" id="CHEBI:58274"/>
        <dbReference type="ChEBI" id="CHEBI:456216"/>
        <dbReference type="EC" id="2.7.2.11"/>
    </reaction>
</comment>
<comment type="pathway">
    <text evidence="1">Amino-acid biosynthesis; L-proline biosynthesis; L-glutamate 5-semialdehyde from L-glutamate: step 1/2.</text>
</comment>
<comment type="subcellular location">
    <subcellularLocation>
        <location evidence="1">Cytoplasm</location>
    </subcellularLocation>
</comment>
<comment type="similarity">
    <text evidence="1">Belongs to the glutamate 5-kinase family.</text>
</comment>
<feature type="chain" id="PRO_1000081063" description="Glutamate 5-kinase">
    <location>
        <begin position="1"/>
        <end position="368"/>
    </location>
</feature>
<feature type="domain" description="PUA" evidence="1">
    <location>
        <begin position="275"/>
        <end position="353"/>
    </location>
</feature>
<feature type="binding site" evidence="1">
    <location>
        <position position="9"/>
    </location>
    <ligand>
        <name>ATP</name>
        <dbReference type="ChEBI" id="CHEBI:30616"/>
    </ligand>
</feature>
<feature type="binding site" evidence="1">
    <location>
        <position position="49"/>
    </location>
    <ligand>
        <name>substrate</name>
    </ligand>
</feature>
<feature type="binding site" evidence="1">
    <location>
        <position position="136"/>
    </location>
    <ligand>
        <name>substrate</name>
    </ligand>
</feature>
<feature type="binding site" evidence="1">
    <location>
        <position position="148"/>
    </location>
    <ligand>
        <name>substrate</name>
    </ligand>
</feature>
<feature type="binding site" evidence="1">
    <location>
        <begin position="168"/>
        <end position="169"/>
    </location>
    <ligand>
        <name>ATP</name>
        <dbReference type="ChEBI" id="CHEBI:30616"/>
    </ligand>
</feature>
<feature type="binding site" evidence="1">
    <location>
        <begin position="210"/>
        <end position="216"/>
    </location>
    <ligand>
        <name>ATP</name>
        <dbReference type="ChEBI" id="CHEBI:30616"/>
    </ligand>
</feature>
<evidence type="ECO:0000255" key="1">
    <source>
        <dbReference type="HAMAP-Rule" id="MF_00456"/>
    </source>
</evidence>
<accession>A5UDH4</accession>
<sequence length="368" mass="40108">MNKKTIVVKFGTSTLTQGSPKLNSPHMMEIVRQIAQLHNDGFRIVIVTSGAIAAGRHYLNHPQLPPTIASKQLLAAVGQSQLIQAWEKLFAIYDIHIGQLLLTRADIEDRERFLNARDTLHALLDNHIIPVINENDAVATAEIKVGDNDNLSALVAILVQAEQLYLLTDQQGLFDSDPRKNPEAKLIPVVEQITDHIRSIAGGSGTNLGTGGMMTKIIAADVATRSGIETIIAPGNRPNVIADLAYEQNIGTKFIAHQSDRLESRKQWLFAAPSAGIITIDNGAQNAILEQNKSLLPAGIINVEGRFSRGEVVKIRTQSGKDIALGMPRYNSDALQLIKGRKSADIENVLGYEYGAVAMHRDDMIILS</sequence>
<dbReference type="EC" id="2.7.2.11" evidence="1"/>
<dbReference type="EMBL" id="CP000671">
    <property type="protein sequence ID" value="ABQ98825.1"/>
    <property type="molecule type" value="Genomic_DNA"/>
</dbReference>
<dbReference type="SMR" id="A5UDH4"/>
<dbReference type="KEGG" id="hip:CGSHiEE_07510"/>
<dbReference type="HOGENOM" id="CLU_025400_2_0_6"/>
<dbReference type="UniPathway" id="UPA00098">
    <property type="reaction ID" value="UER00359"/>
</dbReference>
<dbReference type="GO" id="GO:0005829">
    <property type="term" value="C:cytosol"/>
    <property type="evidence" value="ECO:0007669"/>
    <property type="project" value="TreeGrafter"/>
</dbReference>
<dbReference type="GO" id="GO:0005524">
    <property type="term" value="F:ATP binding"/>
    <property type="evidence" value="ECO:0007669"/>
    <property type="project" value="UniProtKB-KW"/>
</dbReference>
<dbReference type="GO" id="GO:0004349">
    <property type="term" value="F:glutamate 5-kinase activity"/>
    <property type="evidence" value="ECO:0007669"/>
    <property type="project" value="UniProtKB-UniRule"/>
</dbReference>
<dbReference type="GO" id="GO:0003723">
    <property type="term" value="F:RNA binding"/>
    <property type="evidence" value="ECO:0007669"/>
    <property type="project" value="InterPro"/>
</dbReference>
<dbReference type="GO" id="GO:0055129">
    <property type="term" value="P:L-proline biosynthetic process"/>
    <property type="evidence" value="ECO:0007669"/>
    <property type="project" value="UniProtKB-UniRule"/>
</dbReference>
<dbReference type="CDD" id="cd04242">
    <property type="entry name" value="AAK_G5K_ProB"/>
    <property type="match status" value="1"/>
</dbReference>
<dbReference type="CDD" id="cd21157">
    <property type="entry name" value="PUA_G5K"/>
    <property type="match status" value="1"/>
</dbReference>
<dbReference type="FunFam" id="2.30.130.10:FF:000003">
    <property type="entry name" value="Glutamate 5-kinase"/>
    <property type="match status" value="1"/>
</dbReference>
<dbReference type="FunFam" id="3.40.1160.10:FF:000006">
    <property type="entry name" value="Glutamate 5-kinase"/>
    <property type="match status" value="1"/>
</dbReference>
<dbReference type="Gene3D" id="3.40.1160.10">
    <property type="entry name" value="Acetylglutamate kinase-like"/>
    <property type="match status" value="2"/>
</dbReference>
<dbReference type="Gene3D" id="2.30.130.10">
    <property type="entry name" value="PUA domain"/>
    <property type="match status" value="1"/>
</dbReference>
<dbReference type="HAMAP" id="MF_00456">
    <property type="entry name" value="ProB"/>
    <property type="match status" value="1"/>
</dbReference>
<dbReference type="InterPro" id="IPR036393">
    <property type="entry name" value="AceGlu_kinase-like_sf"/>
</dbReference>
<dbReference type="InterPro" id="IPR001048">
    <property type="entry name" value="Asp/Glu/Uridylate_kinase"/>
</dbReference>
<dbReference type="InterPro" id="IPR041739">
    <property type="entry name" value="G5K_ProB"/>
</dbReference>
<dbReference type="InterPro" id="IPR001057">
    <property type="entry name" value="Glu/AcGlu_kinase"/>
</dbReference>
<dbReference type="InterPro" id="IPR011529">
    <property type="entry name" value="Glu_5kinase"/>
</dbReference>
<dbReference type="InterPro" id="IPR005715">
    <property type="entry name" value="Glu_5kinase/COase_Synthase"/>
</dbReference>
<dbReference type="InterPro" id="IPR019797">
    <property type="entry name" value="Glutamate_5-kinase_CS"/>
</dbReference>
<dbReference type="InterPro" id="IPR002478">
    <property type="entry name" value="PUA"/>
</dbReference>
<dbReference type="InterPro" id="IPR015947">
    <property type="entry name" value="PUA-like_sf"/>
</dbReference>
<dbReference type="InterPro" id="IPR036974">
    <property type="entry name" value="PUA_sf"/>
</dbReference>
<dbReference type="NCBIfam" id="TIGR01027">
    <property type="entry name" value="proB"/>
    <property type="match status" value="1"/>
</dbReference>
<dbReference type="PANTHER" id="PTHR43654">
    <property type="entry name" value="GLUTAMATE 5-KINASE"/>
    <property type="match status" value="1"/>
</dbReference>
<dbReference type="PANTHER" id="PTHR43654:SF1">
    <property type="entry name" value="ISOPENTENYL PHOSPHATE KINASE"/>
    <property type="match status" value="1"/>
</dbReference>
<dbReference type="Pfam" id="PF00696">
    <property type="entry name" value="AA_kinase"/>
    <property type="match status" value="1"/>
</dbReference>
<dbReference type="Pfam" id="PF01472">
    <property type="entry name" value="PUA"/>
    <property type="match status" value="1"/>
</dbReference>
<dbReference type="PIRSF" id="PIRSF000729">
    <property type="entry name" value="GK"/>
    <property type="match status" value="1"/>
</dbReference>
<dbReference type="PRINTS" id="PR00474">
    <property type="entry name" value="GLU5KINASE"/>
</dbReference>
<dbReference type="SMART" id="SM00359">
    <property type="entry name" value="PUA"/>
    <property type="match status" value="1"/>
</dbReference>
<dbReference type="SUPFAM" id="SSF53633">
    <property type="entry name" value="Carbamate kinase-like"/>
    <property type="match status" value="1"/>
</dbReference>
<dbReference type="SUPFAM" id="SSF88697">
    <property type="entry name" value="PUA domain-like"/>
    <property type="match status" value="1"/>
</dbReference>
<dbReference type="PROSITE" id="PS00902">
    <property type="entry name" value="GLUTAMATE_5_KINASE"/>
    <property type="match status" value="1"/>
</dbReference>
<dbReference type="PROSITE" id="PS50890">
    <property type="entry name" value="PUA"/>
    <property type="match status" value="1"/>
</dbReference>
<keyword id="KW-0028">Amino-acid biosynthesis</keyword>
<keyword id="KW-0067">ATP-binding</keyword>
<keyword id="KW-0963">Cytoplasm</keyword>
<keyword id="KW-0418">Kinase</keyword>
<keyword id="KW-0547">Nucleotide-binding</keyword>
<keyword id="KW-0641">Proline biosynthesis</keyword>
<keyword id="KW-0808">Transferase</keyword>
<proteinExistence type="inferred from homology"/>
<organism>
    <name type="scientific">Haemophilus influenzae (strain PittEE)</name>
    <dbReference type="NCBI Taxonomy" id="374930"/>
    <lineage>
        <taxon>Bacteria</taxon>
        <taxon>Pseudomonadati</taxon>
        <taxon>Pseudomonadota</taxon>
        <taxon>Gammaproteobacteria</taxon>
        <taxon>Pasteurellales</taxon>
        <taxon>Pasteurellaceae</taxon>
        <taxon>Haemophilus</taxon>
    </lineage>
</organism>
<reference key="1">
    <citation type="journal article" date="2007" name="Genome Biol.">
        <title>Characterization and modeling of the Haemophilus influenzae core and supragenomes based on the complete genomic sequences of Rd and 12 clinical nontypeable strains.</title>
        <authorList>
            <person name="Hogg J.S."/>
            <person name="Hu F.Z."/>
            <person name="Janto B."/>
            <person name="Boissy R."/>
            <person name="Hayes J."/>
            <person name="Keefe R."/>
            <person name="Post J.C."/>
            <person name="Ehrlich G.D."/>
        </authorList>
    </citation>
    <scope>NUCLEOTIDE SEQUENCE [LARGE SCALE GENOMIC DNA]</scope>
    <source>
        <strain>PittEE</strain>
    </source>
</reference>
<protein>
    <recommendedName>
        <fullName evidence="1">Glutamate 5-kinase</fullName>
        <ecNumber evidence="1">2.7.2.11</ecNumber>
    </recommendedName>
    <alternativeName>
        <fullName evidence="1">Gamma-glutamyl kinase</fullName>
        <shortName evidence="1">GK</shortName>
    </alternativeName>
</protein>
<gene>
    <name evidence="1" type="primary">proB</name>
    <name type="ordered locus">CGSHiEE_07510</name>
</gene>